<comment type="function">
    <text evidence="3 10 11">Transcriptional regulator which controls the expression of hepatic genes during the transition of endodermal cells to hepatic progenitor cells, facilitatating the recruitment of RNA pol II to the promoters of target genes (By similarity). Activates the transcription of CYP2C38 (PubMed:30555544). Represses the CLOCK-BMAL1 transcriptional activity and is essential for circadian rhythm maintenance and period regulation in the liver and colon cells (PubMed:30530698).</text>
</comment>
<comment type="subunit">
    <text evidence="3 8 9">Homodimerization is required for HNF4-alpha to bind to its recognition site (By similarity). Interacts with CLOCK, BMAL1 and PER1 (By similarity). Interacts with PER2 (PubMed:20159955). Interacts with CRY1 and CRY2 (PubMed:28751364). Interacts with NR0B2/SHP; the resulting heterodimer is transcriptionally inactive (By similarity). Interacts with DDX3X; this interaction disrupts the interaction between HNF4 and NR0B2 that forms inactive heterodimers and enhances the formation of active HNF4 homodimers (By similarity).</text>
</comment>
<comment type="subcellular location">
    <subcellularLocation>
        <location>Nucleus</location>
    </subcellularLocation>
</comment>
<comment type="alternative products">
    <event type="alternative splicing"/>
    <isoform>
        <id>P49698-1</id>
        <name>Long</name>
        <sequence type="displayed"/>
    </isoform>
    <isoform>
        <id>P49698-2</id>
        <name>Short</name>
        <sequence type="described" ref="VSP_003676"/>
    </isoform>
</comment>
<comment type="tissue specificity">
    <text evidence="10">Expressed in the liver, pancreas and colon in a circadian manner.</text>
</comment>
<comment type="domain">
    <text evidence="3">The 9aaTAD motif is a transactivation domain present in a large number of yeast and animal transcription factors.</text>
</comment>
<comment type="PTM">
    <text evidence="1">Phosphorylated on tyrosine residue(s); phosphorylation is important for its DNA-binding activity. Phosphorylation may directly or indirectly play a regulatory role in the subnuclear distribution. Phosphorylation at Ser-313 by AMPK reduces the ability to form homodimers and bind DNA (By similarity).</text>
</comment>
<comment type="PTM">
    <text evidence="1">Acetylation at Lys-458 lowers transcriptional activation by about two-fold.</text>
</comment>
<comment type="disruption phenotype">
    <text evidence="7">Pancreatic beta-cells-specific knockout results in hyperinsulinemia and hypoglycemia.</text>
</comment>
<comment type="miscellaneous">
    <text evidence="1">Binds fatty acids.</text>
</comment>
<comment type="similarity">
    <text evidence="13">Belongs to the nuclear hormone receptor family. NR2 subfamily.</text>
</comment>
<comment type="sequence caution" evidence="13">
    <conflict type="erroneous initiation">
        <sequence resource="EMBL-CDS" id="BAA06101"/>
    </conflict>
    <text>Truncated N-terminus.</text>
</comment>
<reference key="1">
    <citation type="journal article" date="1995" name="Biochim. Biophys. Acta">
        <title>Identification of two splice isoforms of mRNA for mouse hepatocyte nuclear factor 4 (HNF-4).</title>
        <authorList>
            <person name="Hata S."/>
            <person name="Inoue T."/>
            <person name="Kosuga K."/>
            <person name="Nakashima T."/>
            <person name="Tsukamoto T."/>
            <person name="Osumi T."/>
        </authorList>
    </citation>
    <scope>NUCLEOTIDE SEQUENCE [MRNA] (ISOFORMS LONG AND SHORT)</scope>
    <source>
        <strain>C57BL/6 X CBA</strain>
        <tissue>Liver</tissue>
    </source>
</reference>
<reference key="2">
    <citation type="journal article" date="2006" name="BMC Genomics">
        <title>Genome-wide isolation of growth and obesity QTL using mouse speed congenic strains.</title>
        <authorList>
            <person name="Farber C.R."/>
            <person name="Corva P.M."/>
            <person name="Medrano J.F."/>
        </authorList>
    </citation>
    <scope>NUCLEOTIDE SEQUENCE [GENOMIC DNA]</scope>
    <source>
        <strain>CAST/EiJ</strain>
        <tissue>Liver</tissue>
    </source>
</reference>
<reference key="3">
    <citation type="journal article" date="2005" name="Science">
        <title>The transcriptional landscape of the mammalian genome.</title>
        <authorList>
            <person name="Carninci P."/>
            <person name="Kasukawa T."/>
            <person name="Katayama S."/>
            <person name="Gough J."/>
            <person name="Frith M.C."/>
            <person name="Maeda N."/>
            <person name="Oyama R."/>
            <person name="Ravasi T."/>
            <person name="Lenhard B."/>
            <person name="Wells C."/>
            <person name="Kodzius R."/>
            <person name="Shimokawa K."/>
            <person name="Bajic V.B."/>
            <person name="Brenner S.E."/>
            <person name="Batalov S."/>
            <person name="Forrest A.R."/>
            <person name="Zavolan M."/>
            <person name="Davis M.J."/>
            <person name="Wilming L.G."/>
            <person name="Aidinis V."/>
            <person name="Allen J.E."/>
            <person name="Ambesi-Impiombato A."/>
            <person name="Apweiler R."/>
            <person name="Aturaliya R.N."/>
            <person name="Bailey T.L."/>
            <person name="Bansal M."/>
            <person name="Baxter L."/>
            <person name="Beisel K.W."/>
            <person name="Bersano T."/>
            <person name="Bono H."/>
            <person name="Chalk A.M."/>
            <person name="Chiu K.P."/>
            <person name="Choudhary V."/>
            <person name="Christoffels A."/>
            <person name="Clutterbuck D.R."/>
            <person name="Crowe M.L."/>
            <person name="Dalla E."/>
            <person name="Dalrymple B.P."/>
            <person name="de Bono B."/>
            <person name="Della Gatta G."/>
            <person name="di Bernardo D."/>
            <person name="Down T."/>
            <person name="Engstrom P."/>
            <person name="Fagiolini M."/>
            <person name="Faulkner G."/>
            <person name="Fletcher C.F."/>
            <person name="Fukushima T."/>
            <person name="Furuno M."/>
            <person name="Futaki S."/>
            <person name="Gariboldi M."/>
            <person name="Georgii-Hemming P."/>
            <person name="Gingeras T.R."/>
            <person name="Gojobori T."/>
            <person name="Green R.E."/>
            <person name="Gustincich S."/>
            <person name="Harbers M."/>
            <person name="Hayashi Y."/>
            <person name="Hensch T.K."/>
            <person name="Hirokawa N."/>
            <person name="Hill D."/>
            <person name="Huminiecki L."/>
            <person name="Iacono M."/>
            <person name="Ikeo K."/>
            <person name="Iwama A."/>
            <person name="Ishikawa T."/>
            <person name="Jakt M."/>
            <person name="Kanapin A."/>
            <person name="Katoh M."/>
            <person name="Kawasawa Y."/>
            <person name="Kelso J."/>
            <person name="Kitamura H."/>
            <person name="Kitano H."/>
            <person name="Kollias G."/>
            <person name="Krishnan S.P."/>
            <person name="Kruger A."/>
            <person name="Kummerfeld S.K."/>
            <person name="Kurochkin I.V."/>
            <person name="Lareau L.F."/>
            <person name="Lazarevic D."/>
            <person name="Lipovich L."/>
            <person name="Liu J."/>
            <person name="Liuni S."/>
            <person name="McWilliam S."/>
            <person name="Madan Babu M."/>
            <person name="Madera M."/>
            <person name="Marchionni L."/>
            <person name="Matsuda H."/>
            <person name="Matsuzawa S."/>
            <person name="Miki H."/>
            <person name="Mignone F."/>
            <person name="Miyake S."/>
            <person name="Morris K."/>
            <person name="Mottagui-Tabar S."/>
            <person name="Mulder N."/>
            <person name="Nakano N."/>
            <person name="Nakauchi H."/>
            <person name="Ng P."/>
            <person name="Nilsson R."/>
            <person name="Nishiguchi S."/>
            <person name="Nishikawa S."/>
            <person name="Nori F."/>
            <person name="Ohara O."/>
            <person name="Okazaki Y."/>
            <person name="Orlando V."/>
            <person name="Pang K.C."/>
            <person name="Pavan W.J."/>
            <person name="Pavesi G."/>
            <person name="Pesole G."/>
            <person name="Petrovsky N."/>
            <person name="Piazza S."/>
            <person name="Reed J."/>
            <person name="Reid J.F."/>
            <person name="Ring B.Z."/>
            <person name="Ringwald M."/>
            <person name="Rost B."/>
            <person name="Ruan Y."/>
            <person name="Salzberg S.L."/>
            <person name="Sandelin A."/>
            <person name="Schneider C."/>
            <person name="Schoenbach C."/>
            <person name="Sekiguchi K."/>
            <person name="Semple C.A."/>
            <person name="Seno S."/>
            <person name="Sessa L."/>
            <person name="Sheng Y."/>
            <person name="Shibata Y."/>
            <person name="Shimada H."/>
            <person name="Shimada K."/>
            <person name="Silva D."/>
            <person name="Sinclair B."/>
            <person name="Sperling S."/>
            <person name="Stupka E."/>
            <person name="Sugiura K."/>
            <person name="Sultana R."/>
            <person name="Takenaka Y."/>
            <person name="Taki K."/>
            <person name="Tammoja K."/>
            <person name="Tan S.L."/>
            <person name="Tang S."/>
            <person name="Taylor M.S."/>
            <person name="Tegner J."/>
            <person name="Teichmann S.A."/>
            <person name="Ueda H.R."/>
            <person name="van Nimwegen E."/>
            <person name="Verardo R."/>
            <person name="Wei C.L."/>
            <person name="Yagi K."/>
            <person name="Yamanishi H."/>
            <person name="Zabarovsky E."/>
            <person name="Zhu S."/>
            <person name="Zimmer A."/>
            <person name="Hide W."/>
            <person name="Bult C."/>
            <person name="Grimmond S.M."/>
            <person name="Teasdale R.D."/>
            <person name="Liu E.T."/>
            <person name="Brusic V."/>
            <person name="Quackenbush J."/>
            <person name="Wahlestedt C."/>
            <person name="Mattick J.S."/>
            <person name="Hume D.A."/>
            <person name="Kai C."/>
            <person name="Sasaki D."/>
            <person name="Tomaru Y."/>
            <person name="Fukuda S."/>
            <person name="Kanamori-Katayama M."/>
            <person name="Suzuki M."/>
            <person name="Aoki J."/>
            <person name="Arakawa T."/>
            <person name="Iida J."/>
            <person name="Imamura K."/>
            <person name="Itoh M."/>
            <person name="Kato T."/>
            <person name="Kawaji H."/>
            <person name="Kawagashira N."/>
            <person name="Kawashima T."/>
            <person name="Kojima M."/>
            <person name="Kondo S."/>
            <person name="Konno H."/>
            <person name="Nakano K."/>
            <person name="Ninomiya N."/>
            <person name="Nishio T."/>
            <person name="Okada M."/>
            <person name="Plessy C."/>
            <person name="Shibata K."/>
            <person name="Shiraki T."/>
            <person name="Suzuki S."/>
            <person name="Tagami M."/>
            <person name="Waki K."/>
            <person name="Watahiki A."/>
            <person name="Okamura-Oho Y."/>
            <person name="Suzuki H."/>
            <person name="Kawai J."/>
            <person name="Hayashizaki Y."/>
        </authorList>
    </citation>
    <scope>NUCLEOTIDE SEQUENCE [LARGE SCALE MRNA]</scope>
    <source>
        <strain>C57BL/6J</strain>
        <tissue>Kidney</tissue>
    </source>
</reference>
<reference key="4">
    <citation type="journal article" date="2009" name="PLoS Biol.">
        <title>Lineage-specific biology revealed by a finished genome assembly of the mouse.</title>
        <authorList>
            <person name="Church D.M."/>
            <person name="Goodstadt L."/>
            <person name="Hillier L.W."/>
            <person name="Zody M.C."/>
            <person name="Goldstein S."/>
            <person name="She X."/>
            <person name="Bult C.J."/>
            <person name="Agarwala R."/>
            <person name="Cherry J.L."/>
            <person name="DiCuccio M."/>
            <person name="Hlavina W."/>
            <person name="Kapustin Y."/>
            <person name="Meric P."/>
            <person name="Maglott D."/>
            <person name="Birtle Z."/>
            <person name="Marques A.C."/>
            <person name="Graves T."/>
            <person name="Zhou S."/>
            <person name="Teague B."/>
            <person name="Potamousis K."/>
            <person name="Churas C."/>
            <person name="Place M."/>
            <person name="Herschleb J."/>
            <person name="Runnheim R."/>
            <person name="Forrest D."/>
            <person name="Amos-Landgraf J."/>
            <person name="Schwartz D.C."/>
            <person name="Cheng Z."/>
            <person name="Lindblad-Toh K."/>
            <person name="Eichler E.E."/>
            <person name="Ponting C.P."/>
        </authorList>
    </citation>
    <scope>NUCLEOTIDE SEQUENCE [LARGE SCALE GENOMIC DNA]</scope>
    <source>
        <strain>C57BL/6J</strain>
    </source>
</reference>
<reference key="5">
    <citation type="journal article" date="2004" name="Genome Res.">
        <title>The status, quality, and expansion of the NIH full-length cDNA project: the Mammalian Gene Collection (MGC).</title>
        <authorList>
            <consortium name="The MGC Project Team"/>
        </authorList>
    </citation>
    <scope>NUCLEOTIDE SEQUENCE [LARGE SCALE MRNA]</scope>
    <source>
        <strain>FVB/N</strain>
        <tissue>Kidney</tissue>
    </source>
</reference>
<reference key="6">
    <citation type="submission" date="2006-12" db="EMBL/GenBank/DDBJ databases">
        <title>Expression of HNF4 alpha 3 in pancreatic islets and Ins-1 beta cells.</title>
        <authorList>
            <person name="Huang J."/>
            <person name="Karakucuk V."/>
            <person name="Levitsky L.L."/>
            <person name="Rhoads D.B."/>
        </authorList>
    </citation>
    <scope>NUCLEOTIDE SEQUENCE [MRNA] OF 21-378</scope>
    <source>
        <strain>C57BL/6J</strain>
        <tissue>Liver</tissue>
    </source>
</reference>
<reference key="7">
    <citation type="journal article" date="2007" name="PLoS Med.">
        <title>Macrosomia and hyperinsulinaemic hypoglycaemia in patients with heterozygous mutations in the HNF4A gene.</title>
        <authorList>
            <person name="Pearson E.R."/>
            <person name="Boj S.F."/>
            <person name="Steele A.M."/>
            <person name="Barrett T."/>
            <person name="Stals K."/>
            <person name="Shield J.P."/>
            <person name="Ellard S."/>
            <person name="Ferrer J."/>
            <person name="Hattersley A.T."/>
        </authorList>
    </citation>
    <scope>DISRUPTION PHENOTYPE</scope>
</reference>
<reference key="8">
    <citation type="journal article" date="2007" name="Proc. Natl. Acad. Sci. U.S.A.">
        <title>Large-scale phosphorylation analysis of mouse liver.</title>
        <authorList>
            <person name="Villen J."/>
            <person name="Beausoleil S.A."/>
            <person name="Gerber S.A."/>
            <person name="Gygi S.P."/>
        </authorList>
    </citation>
    <scope>PHOSPHORYLATION [LARGE SCALE ANALYSIS] AT THR-429 AND THR-432</scope>
    <scope>IDENTIFICATION BY MASS SPECTROMETRY [LARGE SCALE ANALYSIS]</scope>
    <source>
        <tissue>Liver</tissue>
    </source>
</reference>
<reference key="9">
    <citation type="journal article" date="2010" name="Cell">
        <title>A tissue-specific atlas of mouse protein phosphorylation and expression.</title>
        <authorList>
            <person name="Huttlin E.L."/>
            <person name="Jedrychowski M.P."/>
            <person name="Elias J.E."/>
            <person name="Goswami T."/>
            <person name="Rad R."/>
            <person name="Beausoleil S.A."/>
            <person name="Villen J."/>
            <person name="Haas W."/>
            <person name="Sowa M.E."/>
            <person name="Gygi S.P."/>
        </authorList>
    </citation>
    <scope>PHOSPHORYLATION [LARGE SCALE ANALYSIS] AT THR-429 AND SER-436</scope>
    <scope>IDENTIFICATION BY MASS SPECTROMETRY [LARGE SCALE ANALYSIS]</scope>
    <source>
        <tissue>Kidney</tissue>
    </source>
</reference>
<reference key="10">
    <citation type="journal article" date="2010" name="Genes Dev.">
        <title>The mammalian clock component PERIOD2 coordinates circadian output by interaction with nuclear receptors.</title>
        <authorList>
            <person name="Schmutz I."/>
            <person name="Ripperger J.A."/>
            <person name="Baeriswyl-Aebischer S."/>
            <person name="Albrecht U."/>
        </authorList>
    </citation>
    <scope>INTERACTION WITH PER2</scope>
</reference>
<reference key="11">
    <citation type="journal article" date="2017" name="Proc. Natl. Acad. Sci. U.S.A.">
        <title>Circadian repressors CRY1 and CRY2 broadly interact with nuclear receptors and modulate transcriptional activity.</title>
        <authorList>
            <person name="Kriebs A."/>
            <person name="Jordan S.D."/>
            <person name="Soto E."/>
            <person name="Henriksson E."/>
            <person name="Sandate C.R."/>
            <person name="Vaughan M.E."/>
            <person name="Chan A.B."/>
            <person name="Duglan D."/>
            <person name="Papp S.J."/>
            <person name="Huber A.L."/>
            <person name="Afetian M.E."/>
            <person name="Yu R.T."/>
            <person name="Zhao X."/>
            <person name="Downes M."/>
            <person name="Evans R.M."/>
            <person name="Lamia K.A."/>
        </authorList>
    </citation>
    <scope>INTERACTION WITH CRY1 AND CRY2</scope>
</reference>
<reference key="12">
    <citation type="journal article" date="2018" name="Proc. Natl. Acad. Sci. U.S.A.">
        <title>Nuclear receptor HNF4A transrepresses CLOCK:BMAL1 and modulates tissue-specific circadian networks.</title>
        <authorList>
            <person name="Qu M."/>
            <person name="Duffy T."/>
            <person name="Hirota T."/>
            <person name="Kay S.A."/>
        </authorList>
    </citation>
    <scope>FUNCTION</scope>
    <scope>TISSUE SPECIFICITY</scope>
</reference>
<reference key="13">
    <citation type="journal article" date="2018" name="Theranostics">
        <title>Small heterodimer partner regulates circadian cytochromes p450 and drug-induced hepatotoxicity.</title>
        <authorList>
            <person name="Zhang T."/>
            <person name="Yu F."/>
            <person name="Guo L."/>
            <person name="Chen M."/>
            <person name="Yuan X."/>
            <person name="Wu B."/>
        </authorList>
    </citation>
    <scope>FUNCTION</scope>
</reference>
<evidence type="ECO:0000250" key="1"/>
<evidence type="ECO:0000250" key="2">
    <source>
        <dbReference type="UniProtKB" id="P22449"/>
    </source>
</evidence>
<evidence type="ECO:0000250" key="3">
    <source>
        <dbReference type="UniProtKB" id="P41235"/>
    </source>
</evidence>
<evidence type="ECO:0000255" key="4">
    <source>
        <dbReference type="PROSITE-ProRule" id="PRU00407"/>
    </source>
</evidence>
<evidence type="ECO:0000255" key="5">
    <source>
        <dbReference type="PROSITE-ProRule" id="PRU01189"/>
    </source>
</evidence>
<evidence type="ECO:0000256" key="6">
    <source>
        <dbReference type="SAM" id="MobiDB-lite"/>
    </source>
</evidence>
<evidence type="ECO:0000269" key="7">
    <source>
    </source>
</evidence>
<evidence type="ECO:0000269" key="8">
    <source>
    </source>
</evidence>
<evidence type="ECO:0000269" key="9">
    <source>
    </source>
</evidence>
<evidence type="ECO:0000269" key="10">
    <source>
    </source>
</evidence>
<evidence type="ECO:0000269" key="11">
    <source>
    </source>
</evidence>
<evidence type="ECO:0000303" key="12">
    <source>
    </source>
</evidence>
<evidence type="ECO:0000305" key="13"/>
<evidence type="ECO:0007744" key="14">
    <source>
    </source>
</evidence>
<evidence type="ECO:0007744" key="15">
    <source>
    </source>
</evidence>
<sequence>MRLSKTLAGMDMADYSAALDPAYTTLEFENVQVLTMGNDTSPSEGANLNSSNSLGVSALCAICGDRATGKHYGASSCDGCKGFFRRSVRKNHMYSCRFSRQCVVDKDKRNQCRYCRLKKCFRAGMKKEAVQNERDRISTRRSSYEDSSLPSINALLQAEVLSQQITSPISGINGDIRAKKIANITDVCESMKEQLLVLVEWAKYIPAFCELLLDDQVALLRAHAGEHLLLGATKRSMVFKDVLLLGNDYIVPRHCPELAEMSRVSIRILDELVLPFQELQIDDNEYACLKAIIFFDPDAKGLSDPGKIKRLRSQVQVSLEDYINDRQYDSRGRFGELLLLLPTLQSITWQMIEQIQFIKLFGMAKIDNLLQEMLLGGSASDAPHTHHPLHPHLMQEHMGTNVIVANTMPSHLSNGQMCEWPRPRGQAATPETPQPSPPSGSGSESYKLLPGAITTIVKPPSAIPQPTITKQEAI</sequence>
<gene>
    <name type="primary">Hnf4a</name>
    <name type="synonym">Hnf-4</name>
    <name type="synonym">Hnf4</name>
    <name type="synonym">Nr2a1</name>
    <name type="synonym">Tcf14</name>
</gene>
<protein>
    <recommendedName>
        <fullName>Hepatocyte nuclear factor 4-alpha</fullName>
        <shortName>HNF-4-alpha</shortName>
    </recommendedName>
    <alternativeName>
        <fullName>Nuclear receptor subfamily 2 group A member 1</fullName>
    </alternativeName>
    <alternativeName>
        <fullName>Transcription factor 14</fullName>
        <shortName>TCF-14</shortName>
    </alternativeName>
    <alternativeName>
        <fullName>Transcription factor HNF-4</fullName>
    </alternativeName>
</protein>
<name>HNF4A_MOUSE</name>
<keyword id="KW-0007">Acetylation</keyword>
<keyword id="KW-0010">Activator</keyword>
<keyword id="KW-0025">Alternative splicing</keyword>
<keyword id="KW-0090">Biological rhythms</keyword>
<keyword id="KW-0238">DNA-binding</keyword>
<keyword id="KW-1017">Isopeptide bond</keyword>
<keyword id="KW-0479">Metal-binding</keyword>
<keyword id="KW-0539">Nucleus</keyword>
<keyword id="KW-0597">Phosphoprotein</keyword>
<keyword id="KW-0675">Receptor</keyword>
<keyword id="KW-1185">Reference proteome</keyword>
<keyword id="KW-0678">Repressor</keyword>
<keyword id="KW-0804">Transcription</keyword>
<keyword id="KW-0805">Transcription regulation</keyword>
<keyword id="KW-0832">Ubl conjugation</keyword>
<keyword id="KW-0862">Zinc</keyword>
<keyword id="KW-0863">Zinc-finger</keyword>
<proteinExistence type="evidence at protein level"/>
<dbReference type="EMBL" id="D29015">
    <property type="protein sequence ID" value="BAA06101.1"/>
    <property type="status" value="ALT_INIT"/>
    <property type="molecule type" value="mRNA"/>
</dbReference>
<dbReference type="EMBL" id="AY902317">
    <property type="protein sequence ID" value="AAX90602.1"/>
    <property type="molecule type" value="Genomic_DNA"/>
</dbReference>
<dbReference type="EMBL" id="AK143948">
    <property type="protein sequence ID" value="BAE25624.1"/>
    <property type="molecule type" value="mRNA"/>
</dbReference>
<dbReference type="EMBL" id="AL591488">
    <property type="status" value="NOT_ANNOTATED_CDS"/>
    <property type="molecule type" value="Genomic_DNA"/>
</dbReference>
<dbReference type="EMBL" id="BC039220">
    <property type="protein sequence ID" value="AAH39220.1"/>
    <property type="molecule type" value="mRNA"/>
</dbReference>
<dbReference type="EMBL" id="EF193393">
    <property type="protein sequence ID" value="ABM69091.1"/>
    <property type="molecule type" value="mRNA"/>
</dbReference>
<dbReference type="CCDS" id="CCDS17012.1">
    <molecule id="P49698-1"/>
</dbReference>
<dbReference type="PIR" id="S52074">
    <property type="entry name" value="S52074"/>
</dbReference>
<dbReference type="RefSeq" id="NP_032287.2">
    <molecule id="P49698-1"/>
    <property type="nucleotide sequence ID" value="NM_008261.3"/>
</dbReference>
<dbReference type="RefSeq" id="XP_006498850.1">
    <molecule id="P49698-2"/>
    <property type="nucleotide sequence ID" value="XM_006498787.1"/>
</dbReference>
<dbReference type="SMR" id="P49698"/>
<dbReference type="BioGRID" id="200354">
    <property type="interactions" value="8"/>
</dbReference>
<dbReference type="CORUM" id="P49698"/>
<dbReference type="FunCoup" id="P49698">
    <property type="interactions" value="2080"/>
</dbReference>
<dbReference type="IntAct" id="P49698">
    <property type="interactions" value="2"/>
</dbReference>
<dbReference type="STRING" id="10090.ENSMUSP00000018094"/>
<dbReference type="iPTMnet" id="P49698"/>
<dbReference type="PhosphoSitePlus" id="P49698"/>
<dbReference type="SwissPalm" id="P49698"/>
<dbReference type="PaxDb" id="10090-ENSMUSP00000018094"/>
<dbReference type="PeptideAtlas" id="P49698"/>
<dbReference type="ProteomicsDB" id="273158">
    <molecule id="P49698-1"/>
</dbReference>
<dbReference type="ProteomicsDB" id="273159">
    <molecule id="P49698-2"/>
</dbReference>
<dbReference type="Antibodypedia" id="1326">
    <property type="antibodies" value="1000 antibodies from 43 providers"/>
</dbReference>
<dbReference type="DNASU" id="15378"/>
<dbReference type="Ensembl" id="ENSMUST00000018094.13">
    <molecule id="P49698-1"/>
    <property type="protein sequence ID" value="ENSMUSP00000018094.7"/>
    <property type="gene ID" value="ENSMUSG00000017950.17"/>
</dbReference>
<dbReference type="GeneID" id="15378"/>
<dbReference type="KEGG" id="mmu:15378"/>
<dbReference type="UCSC" id="uc008nta.2">
    <molecule id="P49698-1"/>
    <property type="organism name" value="mouse"/>
</dbReference>
<dbReference type="UCSC" id="uc012cit.1">
    <molecule id="P49698-2"/>
    <property type="organism name" value="mouse"/>
</dbReference>
<dbReference type="AGR" id="MGI:109128"/>
<dbReference type="CTD" id="3172"/>
<dbReference type="MGI" id="MGI:109128">
    <property type="gene designation" value="Hnf4a"/>
</dbReference>
<dbReference type="VEuPathDB" id="HostDB:ENSMUSG00000017950"/>
<dbReference type="eggNOG" id="KOG4215">
    <property type="taxonomic scope" value="Eukaryota"/>
</dbReference>
<dbReference type="GeneTree" id="ENSGT00940000157965"/>
<dbReference type="InParanoid" id="P49698"/>
<dbReference type="OMA" id="EFENMQM"/>
<dbReference type="OrthoDB" id="5771769at2759"/>
<dbReference type="PhylomeDB" id="P49698"/>
<dbReference type="TreeFam" id="TF352097"/>
<dbReference type="Reactome" id="R-MMU-383280">
    <property type="pathway name" value="Nuclear Receptor transcription pathway"/>
</dbReference>
<dbReference type="BioGRID-ORCS" id="15378">
    <property type="hits" value="0 hits in 78 CRISPR screens"/>
</dbReference>
<dbReference type="ChiTaRS" id="Hnf4a">
    <property type="organism name" value="mouse"/>
</dbReference>
<dbReference type="PRO" id="PR:P49698"/>
<dbReference type="Proteomes" id="UP000000589">
    <property type="component" value="Chromosome 2"/>
</dbReference>
<dbReference type="RNAct" id="P49698">
    <property type="molecule type" value="protein"/>
</dbReference>
<dbReference type="Bgee" id="ENSMUSG00000017950">
    <property type="expression patterns" value="Expressed in paneth cell and 112 other cell types or tissues"/>
</dbReference>
<dbReference type="ExpressionAtlas" id="P49698">
    <property type="expression patterns" value="baseline and differential"/>
</dbReference>
<dbReference type="GO" id="GO:0000785">
    <property type="term" value="C:chromatin"/>
    <property type="evidence" value="ECO:0000305"/>
    <property type="project" value="MGI"/>
</dbReference>
<dbReference type="GO" id="GO:0005829">
    <property type="term" value="C:cytosol"/>
    <property type="evidence" value="ECO:0000304"/>
    <property type="project" value="Reactome"/>
</dbReference>
<dbReference type="GO" id="GO:0005654">
    <property type="term" value="C:nucleoplasm"/>
    <property type="evidence" value="ECO:0000304"/>
    <property type="project" value="Reactome"/>
</dbReference>
<dbReference type="GO" id="GO:0005634">
    <property type="term" value="C:nucleus"/>
    <property type="evidence" value="ECO:0000314"/>
    <property type="project" value="MGI"/>
</dbReference>
<dbReference type="GO" id="GO:0003682">
    <property type="term" value="F:chromatin binding"/>
    <property type="evidence" value="ECO:0000314"/>
    <property type="project" value="MGI"/>
</dbReference>
<dbReference type="GO" id="GO:0003677">
    <property type="term" value="F:DNA binding"/>
    <property type="evidence" value="ECO:0000314"/>
    <property type="project" value="MGI"/>
</dbReference>
<dbReference type="GO" id="GO:0001228">
    <property type="term" value="F:DNA-binding transcription activator activity, RNA polymerase II-specific"/>
    <property type="evidence" value="ECO:0000314"/>
    <property type="project" value="MGI"/>
</dbReference>
<dbReference type="GO" id="GO:0003700">
    <property type="term" value="F:DNA-binding transcription factor activity"/>
    <property type="evidence" value="ECO:0000314"/>
    <property type="project" value="BHF-UCL"/>
</dbReference>
<dbReference type="GO" id="GO:0000981">
    <property type="term" value="F:DNA-binding transcription factor activity, RNA polymerase II-specific"/>
    <property type="evidence" value="ECO:0000314"/>
    <property type="project" value="MGI"/>
</dbReference>
<dbReference type="GO" id="GO:0005504">
    <property type="term" value="F:fatty acid binding"/>
    <property type="evidence" value="ECO:0007669"/>
    <property type="project" value="Ensembl"/>
</dbReference>
<dbReference type="GO" id="GO:0004879">
    <property type="term" value="F:nuclear receptor activity"/>
    <property type="evidence" value="ECO:0007669"/>
    <property type="project" value="Ensembl"/>
</dbReference>
<dbReference type="GO" id="GO:0042803">
    <property type="term" value="F:protein homodimerization activity"/>
    <property type="evidence" value="ECO:0007669"/>
    <property type="project" value="Ensembl"/>
</dbReference>
<dbReference type="GO" id="GO:0000978">
    <property type="term" value="F:RNA polymerase II cis-regulatory region sequence-specific DNA binding"/>
    <property type="evidence" value="ECO:0000314"/>
    <property type="project" value="MGI"/>
</dbReference>
<dbReference type="GO" id="GO:0061629">
    <property type="term" value="F:RNA polymerase II-specific DNA-binding transcription factor binding"/>
    <property type="evidence" value="ECO:0000353"/>
    <property type="project" value="BHF-UCL"/>
</dbReference>
<dbReference type="GO" id="GO:0043565">
    <property type="term" value="F:sequence-specific DNA binding"/>
    <property type="evidence" value="ECO:0000314"/>
    <property type="project" value="MGI"/>
</dbReference>
<dbReference type="GO" id="GO:0005102">
    <property type="term" value="F:signaling receptor binding"/>
    <property type="evidence" value="ECO:0007669"/>
    <property type="project" value="Ensembl"/>
</dbReference>
<dbReference type="GO" id="GO:0000976">
    <property type="term" value="F:transcription cis-regulatory region binding"/>
    <property type="evidence" value="ECO:0000314"/>
    <property type="project" value="BHF-UCL"/>
</dbReference>
<dbReference type="GO" id="GO:0008270">
    <property type="term" value="F:zinc ion binding"/>
    <property type="evidence" value="ECO:0007669"/>
    <property type="project" value="UniProtKB-KW"/>
</dbReference>
<dbReference type="GO" id="GO:0007596">
    <property type="term" value="P:blood coagulation"/>
    <property type="evidence" value="ECO:0007669"/>
    <property type="project" value="Ensembl"/>
</dbReference>
<dbReference type="GO" id="GO:0042632">
    <property type="term" value="P:cholesterol homeostasis"/>
    <property type="evidence" value="ECO:0000315"/>
    <property type="project" value="BHF-UCL"/>
</dbReference>
<dbReference type="GO" id="GO:0010467">
    <property type="term" value="P:gene expression"/>
    <property type="evidence" value="ECO:0000315"/>
    <property type="project" value="MGI"/>
</dbReference>
<dbReference type="GO" id="GO:0042593">
    <property type="term" value="P:glucose homeostasis"/>
    <property type="evidence" value="ECO:0000315"/>
    <property type="project" value="BHF-UCL"/>
</dbReference>
<dbReference type="GO" id="GO:0006629">
    <property type="term" value="P:lipid metabolic process"/>
    <property type="evidence" value="ECO:0000315"/>
    <property type="project" value="MGI"/>
</dbReference>
<dbReference type="GO" id="GO:0030308">
    <property type="term" value="P:negative regulation of cell growth"/>
    <property type="evidence" value="ECO:0007669"/>
    <property type="project" value="Ensembl"/>
</dbReference>
<dbReference type="GO" id="GO:0008285">
    <property type="term" value="P:negative regulation of cell population proliferation"/>
    <property type="evidence" value="ECO:0007669"/>
    <property type="project" value="Ensembl"/>
</dbReference>
<dbReference type="GO" id="GO:0045892">
    <property type="term" value="P:negative regulation of DNA-templated transcription"/>
    <property type="evidence" value="ECO:0000250"/>
    <property type="project" value="UniProtKB"/>
</dbReference>
<dbReference type="GO" id="GO:0055091">
    <property type="term" value="P:phospholipid homeostasis"/>
    <property type="evidence" value="ECO:0000315"/>
    <property type="project" value="BHF-UCL"/>
</dbReference>
<dbReference type="GO" id="GO:0045893">
    <property type="term" value="P:positive regulation of DNA-templated transcription"/>
    <property type="evidence" value="ECO:0000314"/>
    <property type="project" value="UniProtKB"/>
</dbReference>
<dbReference type="GO" id="GO:0045944">
    <property type="term" value="P:positive regulation of transcription by RNA polymerase II"/>
    <property type="evidence" value="ECO:0000314"/>
    <property type="project" value="BHF-UCL"/>
</dbReference>
<dbReference type="GO" id="GO:0042752">
    <property type="term" value="P:regulation of circadian rhythm"/>
    <property type="evidence" value="ECO:0000315"/>
    <property type="project" value="UniProtKB"/>
</dbReference>
<dbReference type="GO" id="GO:0006355">
    <property type="term" value="P:regulation of DNA-templated transcription"/>
    <property type="evidence" value="ECO:0000315"/>
    <property type="project" value="MGI"/>
</dbReference>
<dbReference type="GO" id="GO:0010470">
    <property type="term" value="P:regulation of gastrulation"/>
    <property type="evidence" value="ECO:0000315"/>
    <property type="project" value="MGI"/>
</dbReference>
<dbReference type="GO" id="GO:0050796">
    <property type="term" value="P:regulation of insulin secretion"/>
    <property type="evidence" value="ECO:0000315"/>
    <property type="project" value="BHF-UCL"/>
</dbReference>
<dbReference type="GO" id="GO:0019216">
    <property type="term" value="P:regulation of lipid metabolic process"/>
    <property type="evidence" value="ECO:0007669"/>
    <property type="project" value="Ensembl"/>
</dbReference>
<dbReference type="GO" id="GO:0090368">
    <property type="term" value="P:regulation of ornithine metabolic process"/>
    <property type="evidence" value="ECO:0007669"/>
    <property type="project" value="Ensembl"/>
</dbReference>
<dbReference type="GO" id="GO:0006357">
    <property type="term" value="P:regulation of transcription by RNA polymerase II"/>
    <property type="evidence" value="ECO:0000315"/>
    <property type="project" value="MGI"/>
</dbReference>
<dbReference type="GO" id="GO:0009749">
    <property type="term" value="P:response to glucose"/>
    <property type="evidence" value="ECO:0000315"/>
    <property type="project" value="BHF-UCL"/>
</dbReference>
<dbReference type="GO" id="GO:0048511">
    <property type="term" value="P:rhythmic process"/>
    <property type="evidence" value="ECO:0007669"/>
    <property type="project" value="UniProtKB-KW"/>
</dbReference>
<dbReference type="GO" id="GO:0007548">
    <property type="term" value="P:sex differentiation"/>
    <property type="evidence" value="ECO:0000315"/>
    <property type="project" value="MGI"/>
</dbReference>
<dbReference type="GO" id="GO:0023019">
    <property type="term" value="P:signal transduction involved in regulation of gene expression"/>
    <property type="evidence" value="ECO:0000314"/>
    <property type="project" value="MGI"/>
</dbReference>
<dbReference type="GO" id="GO:0006366">
    <property type="term" value="P:transcription by RNA polymerase II"/>
    <property type="evidence" value="ECO:0000314"/>
    <property type="project" value="MGI"/>
</dbReference>
<dbReference type="GO" id="GO:0070328">
    <property type="term" value="P:triglyceride homeostasis"/>
    <property type="evidence" value="ECO:0000315"/>
    <property type="project" value="BHF-UCL"/>
</dbReference>
<dbReference type="GO" id="GO:0006805">
    <property type="term" value="P:xenobiotic metabolic process"/>
    <property type="evidence" value="ECO:0007669"/>
    <property type="project" value="Ensembl"/>
</dbReference>
<dbReference type="CDD" id="cd06960">
    <property type="entry name" value="NR_DBD_HNF4A"/>
    <property type="match status" value="1"/>
</dbReference>
<dbReference type="CDD" id="cd06931">
    <property type="entry name" value="NR_LBD_HNF4_like"/>
    <property type="match status" value="1"/>
</dbReference>
<dbReference type="FunFam" id="1.10.565.10:FF:000007">
    <property type="entry name" value="Hepatocyte nuclear factor 4 alpha"/>
    <property type="match status" value="1"/>
</dbReference>
<dbReference type="FunFam" id="3.30.50.10:FF:000012">
    <property type="entry name" value="Hepatocyte nuclear factor 4, alpha"/>
    <property type="match status" value="1"/>
</dbReference>
<dbReference type="Gene3D" id="3.30.50.10">
    <property type="entry name" value="Erythroid Transcription Factor GATA-1, subunit A"/>
    <property type="match status" value="1"/>
</dbReference>
<dbReference type="Gene3D" id="1.10.565.10">
    <property type="entry name" value="Retinoid X Receptor"/>
    <property type="match status" value="1"/>
</dbReference>
<dbReference type="InterPro" id="IPR049636">
    <property type="entry name" value="HNF4-like_DBD"/>
</dbReference>
<dbReference type="InterPro" id="IPR049635">
    <property type="entry name" value="HNF4_LBD"/>
</dbReference>
<dbReference type="InterPro" id="IPR035500">
    <property type="entry name" value="NHR-like_dom_sf"/>
</dbReference>
<dbReference type="InterPro" id="IPR000536">
    <property type="entry name" value="Nucl_hrmn_rcpt_lig-bd"/>
</dbReference>
<dbReference type="InterPro" id="IPR050274">
    <property type="entry name" value="Nuclear_hormone_rcpt_NR2"/>
</dbReference>
<dbReference type="InterPro" id="IPR001723">
    <property type="entry name" value="Nuclear_hrmn_rcpt"/>
</dbReference>
<dbReference type="InterPro" id="IPR001628">
    <property type="entry name" value="Znf_hrmn_rcpt"/>
</dbReference>
<dbReference type="InterPro" id="IPR013088">
    <property type="entry name" value="Znf_NHR/GATA"/>
</dbReference>
<dbReference type="PANTHER" id="PTHR24083">
    <property type="entry name" value="NUCLEAR HORMONE RECEPTOR"/>
    <property type="match status" value="1"/>
</dbReference>
<dbReference type="Pfam" id="PF00104">
    <property type="entry name" value="Hormone_recep"/>
    <property type="match status" value="1"/>
</dbReference>
<dbReference type="Pfam" id="PF00105">
    <property type="entry name" value="zf-C4"/>
    <property type="match status" value="1"/>
</dbReference>
<dbReference type="PRINTS" id="PR01282">
    <property type="entry name" value="COUPTNFACTOR"/>
</dbReference>
<dbReference type="PRINTS" id="PR00398">
    <property type="entry name" value="STRDHORMONER"/>
</dbReference>
<dbReference type="PRINTS" id="PR00047">
    <property type="entry name" value="STROIDFINGER"/>
</dbReference>
<dbReference type="SMART" id="SM00430">
    <property type="entry name" value="HOLI"/>
    <property type="match status" value="1"/>
</dbReference>
<dbReference type="SMART" id="SM00399">
    <property type="entry name" value="ZnF_C4"/>
    <property type="match status" value="1"/>
</dbReference>
<dbReference type="SUPFAM" id="SSF57716">
    <property type="entry name" value="Glucocorticoid receptor-like (DNA-binding domain)"/>
    <property type="match status" value="1"/>
</dbReference>
<dbReference type="SUPFAM" id="SSF48508">
    <property type="entry name" value="Nuclear receptor ligand-binding domain"/>
    <property type="match status" value="1"/>
</dbReference>
<dbReference type="PROSITE" id="PS51843">
    <property type="entry name" value="NR_LBD"/>
    <property type="match status" value="1"/>
</dbReference>
<dbReference type="PROSITE" id="PS00031">
    <property type="entry name" value="NUCLEAR_REC_DBD_1"/>
    <property type="match status" value="1"/>
</dbReference>
<dbReference type="PROSITE" id="PS51030">
    <property type="entry name" value="NUCLEAR_REC_DBD_2"/>
    <property type="match status" value="1"/>
</dbReference>
<feature type="chain" id="PRO_0000053559" description="Hepatocyte nuclear factor 4-alpha">
    <location>
        <begin position="1"/>
        <end position="474"/>
    </location>
</feature>
<feature type="domain" description="NR LBD" evidence="5">
    <location>
        <begin position="147"/>
        <end position="377"/>
    </location>
</feature>
<feature type="DNA-binding region" description="Nuclear receptor" evidence="4">
    <location>
        <begin position="57"/>
        <end position="132"/>
    </location>
</feature>
<feature type="zinc finger region" description="NR C4-type" evidence="4">
    <location>
        <begin position="60"/>
        <end position="80"/>
    </location>
</feature>
<feature type="zinc finger region" description="NR C4-type" evidence="4">
    <location>
        <begin position="96"/>
        <end position="120"/>
    </location>
</feature>
<feature type="region of interest" description="Disordered" evidence="6">
    <location>
        <begin position="413"/>
        <end position="450"/>
    </location>
</feature>
<feature type="short sequence motif" description="9aaTAD" evidence="3">
    <location>
        <begin position="368"/>
        <end position="376"/>
    </location>
</feature>
<feature type="modified residue" description="Phosphoserine" evidence="2">
    <location>
        <position position="142"/>
    </location>
</feature>
<feature type="modified residue" description="Phosphoserine" evidence="2">
    <location>
        <position position="143"/>
    </location>
</feature>
<feature type="modified residue" description="Phosphotyrosine" evidence="3">
    <location>
        <position position="144"/>
    </location>
</feature>
<feature type="modified residue" description="Phosphothreonine" evidence="3">
    <location>
        <position position="166"/>
    </location>
</feature>
<feature type="modified residue" description="Phosphoserine" evidence="3">
    <location>
        <position position="167"/>
    </location>
</feature>
<feature type="modified residue" description="Phosphoserine; by AMPK" evidence="3">
    <location>
        <position position="313"/>
    </location>
</feature>
<feature type="modified residue" description="Phosphothreonine" evidence="14 15">
    <location>
        <position position="429"/>
    </location>
</feature>
<feature type="modified residue" description="Phosphothreonine" evidence="14">
    <location>
        <position position="432"/>
    </location>
</feature>
<feature type="modified residue" description="Phosphoserine" evidence="15">
    <location>
        <position position="436"/>
    </location>
</feature>
<feature type="modified residue" description="N6-acetyllysine" evidence="3">
    <location>
        <position position="458"/>
    </location>
</feature>
<feature type="cross-link" description="Glycyl lysine isopeptide (Lys-Gly) (interchain with G-Cter in ubiquitin)" evidence="3">
    <location>
        <position position="234"/>
    </location>
</feature>
<feature type="cross-link" description="Glycyl lysine isopeptide (Lys-Gly) (interchain with G-Cter in ubiquitin)" evidence="3">
    <location>
        <position position="307"/>
    </location>
</feature>
<feature type="splice variant" id="VSP_003676" description="In isoform Short." evidence="12">
    <original>CEWPRPRGQAA</original>
    <variation>S</variation>
    <location>
        <begin position="418"/>
        <end position="428"/>
    </location>
</feature>
<feature type="sequence conflict" description="In Ref. 1; BAA06101." evidence="13" ref="1">
    <original>G</original>
    <variation>S</variation>
    <location>
        <position position="55"/>
    </location>
</feature>
<feature type="sequence conflict" description="In Ref. 3; BAE25624." evidence="13" ref="3">
    <original>K</original>
    <variation>R</variation>
    <location>
        <position position="365"/>
    </location>
</feature>
<feature type="sequence conflict" description="In Ref. 6; ABM69091." evidence="13" ref="6">
    <original>S</original>
    <variation>L</variation>
    <location>
        <position position="378"/>
    </location>
</feature>
<accession>P49698</accession>
<accession>A2A5I5</accession>
<accession>A2ICH0</accession>
<accession>Q3UNX3</accession>
<accession>Q8CFY1</accession>
<organism>
    <name type="scientific">Mus musculus</name>
    <name type="common">Mouse</name>
    <dbReference type="NCBI Taxonomy" id="10090"/>
    <lineage>
        <taxon>Eukaryota</taxon>
        <taxon>Metazoa</taxon>
        <taxon>Chordata</taxon>
        <taxon>Craniata</taxon>
        <taxon>Vertebrata</taxon>
        <taxon>Euteleostomi</taxon>
        <taxon>Mammalia</taxon>
        <taxon>Eutheria</taxon>
        <taxon>Euarchontoglires</taxon>
        <taxon>Glires</taxon>
        <taxon>Rodentia</taxon>
        <taxon>Myomorpha</taxon>
        <taxon>Muroidea</taxon>
        <taxon>Muridae</taxon>
        <taxon>Murinae</taxon>
        <taxon>Mus</taxon>
        <taxon>Mus</taxon>
    </lineage>
</organism>